<reference key="1">
    <citation type="journal article" date="2007" name="Photosyn. Res.">
        <title>Complete nucleotide sequence of the freshwater unicellular cyanobacterium Synechococcus elongatus PCC 6301 chromosome: gene content and organization.</title>
        <authorList>
            <person name="Sugita C."/>
            <person name="Ogata K."/>
            <person name="Shikata M."/>
            <person name="Jikuya H."/>
            <person name="Takano J."/>
            <person name="Furumichi M."/>
            <person name="Kanehisa M."/>
            <person name="Omata T."/>
            <person name="Sugiura M."/>
            <person name="Sugita M."/>
        </authorList>
    </citation>
    <scope>NUCLEOTIDE SEQUENCE [LARGE SCALE GENOMIC DNA]</scope>
    <source>
        <strain>ATCC 27144 / PCC 6301 / SAUG 1402/1</strain>
    </source>
</reference>
<evidence type="ECO:0000250" key="1"/>
<evidence type="ECO:0000255" key="2"/>
<evidence type="ECO:0000305" key="3"/>
<dbReference type="EMBL" id="AP008231">
    <property type="protein sequence ID" value="BAD78641.1"/>
    <property type="status" value="ALT_INIT"/>
    <property type="molecule type" value="Genomic_DNA"/>
</dbReference>
<dbReference type="RefSeq" id="WP_041676922.1">
    <property type="nucleotide sequence ID" value="NC_006576.1"/>
</dbReference>
<dbReference type="SMR" id="Q5N4X8"/>
<dbReference type="KEGG" id="syc:syc0451_d"/>
<dbReference type="eggNOG" id="COG4399">
    <property type="taxonomic scope" value="Bacteria"/>
</dbReference>
<dbReference type="Proteomes" id="UP000001175">
    <property type="component" value="Chromosome"/>
</dbReference>
<dbReference type="GO" id="GO:0005886">
    <property type="term" value="C:plasma membrane"/>
    <property type="evidence" value="ECO:0007669"/>
    <property type="project" value="UniProtKB-SubCell"/>
</dbReference>
<dbReference type="InterPro" id="IPR007383">
    <property type="entry name" value="DUF445"/>
</dbReference>
<dbReference type="InterPro" id="IPR016991">
    <property type="entry name" value="UCP032178"/>
</dbReference>
<dbReference type="PANTHER" id="PTHR35791">
    <property type="entry name" value="UPF0754 MEMBRANE PROTEIN YHEB"/>
    <property type="match status" value="1"/>
</dbReference>
<dbReference type="PANTHER" id="PTHR35791:SF1">
    <property type="entry name" value="UPF0754 MEMBRANE PROTEIN YHEB"/>
    <property type="match status" value="1"/>
</dbReference>
<dbReference type="Pfam" id="PF04286">
    <property type="entry name" value="DUF445"/>
    <property type="match status" value="1"/>
</dbReference>
<dbReference type="PIRSF" id="PIRSF032178">
    <property type="entry name" value="UCP032178"/>
    <property type="match status" value="1"/>
</dbReference>
<keyword id="KW-0997">Cell inner membrane</keyword>
<keyword id="KW-1003">Cell membrane</keyword>
<keyword id="KW-0472">Membrane</keyword>
<keyword id="KW-0812">Transmembrane</keyword>
<keyword id="KW-1133">Transmembrane helix</keyword>
<protein>
    <recommendedName>
        <fullName>UPF0754 membrane protein syc0451_d</fullName>
    </recommendedName>
</protein>
<accession>Q5N4X8</accession>
<proteinExistence type="inferred from homology"/>
<gene>
    <name type="ordered locus">syc0451_d</name>
</gene>
<feature type="chain" id="PRO_0000388324" description="UPF0754 membrane protein syc0451_d">
    <location>
        <begin position="1"/>
        <end position="412"/>
    </location>
</feature>
<feature type="transmembrane region" description="Helical" evidence="2">
    <location>
        <begin position="8"/>
        <end position="28"/>
    </location>
</feature>
<feature type="transmembrane region" description="Helical" evidence="2">
    <location>
        <begin position="390"/>
        <end position="410"/>
    </location>
</feature>
<name>Y451_SYNP6</name>
<organism>
    <name type="scientific">Synechococcus sp. (strain ATCC 27144 / PCC 6301 / SAUG 1402/1)</name>
    <name type="common">Anacystis nidulans</name>
    <dbReference type="NCBI Taxonomy" id="269084"/>
    <lineage>
        <taxon>Bacteria</taxon>
        <taxon>Bacillati</taxon>
        <taxon>Cyanobacteriota</taxon>
        <taxon>Cyanophyceae</taxon>
        <taxon>Synechococcales</taxon>
        <taxon>Synechococcaceae</taxon>
        <taxon>Synechococcus</taxon>
    </lineage>
</organism>
<comment type="subcellular location">
    <subcellularLocation>
        <location evidence="1">Cell inner membrane</location>
        <topology evidence="1">Multi-pass membrane protein</topology>
    </subcellularLocation>
</comment>
<comment type="similarity">
    <text evidence="3">Belongs to the UPF0754 family.</text>
</comment>
<comment type="sequence caution" evidence="3">
    <conflict type="erroneous initiation">
        <sequence resource="EMBL-CDS" id="BAD78641"/>
    </conflict>
</comment>
<sequence length="412" mass="45908">MDGRTLGLWLLPPVVGGIIGYFTNDLAIRMLFRPYRPVVIGGWQLPFTPGLIPANQGRLARRIADAILGSLLTPDALHDLARRLLELPRLEAAIAWLVSLLLERLREVRDPRSIEVAADVLRDLAGSALPRWLRAIVRQRQGLDAQIDRWFEQQLLSQKLGPLQAQQLGDWLLEGAFPPDQIRRVMLDFLTDDNIRNLDRIVRDRTRGTDWVIANLFGVQSSLQRLRQFLREQPEAGDAVIAELSQRLALRQQLSQALQTFQLTDLPQTTLTDLRLQLRQGLRQWLDQDGLSLLEGALGGLDWTAAARALLDRLRTAVISDEAIAAFRHEVALILDQRLEHELEDLVAAALPILALEDLIIGRVEATPAADLEAAIQGIVRSELQAIVNIGGVLGVLLGCVQSLINVWSLST</sequence>